<reference key="1">
    <citation type="submission" date="2007-11" db="EMBL/GenBank/DDBJ databases">
        <title>Complete sequence of Petroga mobilis SJ95.</title>
        <authorList>
            <consortium name="US DOE Joint Genome Institute"/>
            <person name="Copeland A."/>
            <person name="Lucas S."/>
            <person name="Lapidus A."/>
            <person name="Barry K."/>
            <person name="Glavina del Rio T."/>
            <person name="Dalin E."/>
            <person name="Tice H."/>
            <person name="Pitluck S."/>
            <person name="Meincke L."/>
            <person name="Brettin T."/>
            <person name="Bruce D."/>
            <person name="Detter J.C."/>
            <person name="Han C."/>
            <person name="Kuske C.R."/>
            <person name="Schmutz J."/>
            <person name="Larimer F."/>
            <person name="Land M."/>
            <person name="Hauser L."/>
            <person name="Kyrpides N."/>
            <person name="Mikhailova N."/>
            <person name="Noll K."/>
            <person name="Richardson P."/>
        </authorList>
    </citation>
    <scope>NUCLEOTIDE SEQUENCE [LARGE SCALE GENOMIC DNA]</scope>
    <source>
        <strain>DSM 10674 / SJ95</strain>
    </source>
</reference>
<feature type="chain" id="PRO_1000080161" description="Small ribosomal subunit protein bS16">
    <location>
        <begin position="1"/>
        <end position="111"/>
    </location>
</feature>
<feature type="region of interest" description="Disordered" evidence="2">
    <location>
        <begin position="92"/>
        <end position="111"/>
    </location>
</feature>
<feature type="compositionally biased region" description="Acidic residues" evidence="2">
    <location>
        <begin position="100"/>
        <end position="111"/>
    </location>
</feature>
<comment type="similarity">
    <text evidence="1">Belongs to the bacterial ribosomal protein bS16 family.</text>
</comment>
<protein>
    <recommendedName>
        <fullName evidence="1">Small ribosomal subunit protein bS16</fullName>
    </recommendedName>
    <alternativeName>
        <fullName evidence="3">30S ribosomal protein S16</fullName>
    </alternativeName>
</protein>
<name>RS16_PETMO</name>
<evidence type="ECO:0000255" key="1">
    <source>
        <dbReference type="HAMAP-Rule" id="MF_00385"/>
    </source>
</evidence>
<evidence type="ECO:0000256" key="2">
    <source>
        <dbReference type="SAM" id="MobiDB-lite"/>
    </source>
</evidence>
<evidence type="ECO:0000305" key="3"/>
<accession>A9BEZ8</accession>
<keyword id="KW-0687">Ribonucleoprotein</keyword>
<keyword id="KW-0689">Ribosomal protein</keyword>
<gene>
    <name evidence="1" type="primary">rpsP</name>
    <name type="ordered locus">Pmob_0320</name>
</gene>
<dbReference type="EMBL" id="CP000879">
    <property type="protein sequence ID" value="ABX31062.1"/>
    <property type="molecule type" value="Genomic_DNA"/>
</dbReference>
<dbReference type="RefSeq" id="WP_012208169.1">
    <property type="nucleotide sequence ID" value="NC_010003.1"/>
</dbReference>
<dbReference type="SMR" id="A9BEZ8"/>
<dbReference type="STRING" id="403833.Pmob_0320"/>
<dbReference type="KEGG" id="pmo:Pmob_0320"/>
<dbReference type="eggNOG" id="COG0228">
    <property type="taxonomic scope" value="Bacteria"/>
</dbReference>
<dbReference type="HOGENOM" id="CLU_100590_5_2_0"/>
<dbReference type="OrthoDB" id="9807878at2"/>
<dbReference type="Proteomes" id="UP000000789">
    <property type="component" value="Chromosome"/>
</dbReference>
<dbReference type="GO" id="GO:0005737">
    <property type="term" value="C:cytoplasm"/>
    <property type="evidence" value="ECO:0007669"/>
    <property type="project" value="UniProtKB-ARBA"/>
</dbReference>
<dbReference type="GO" id="GO:0015935">
    <property type="term" value="C:small ribosomal subunit"/>
    <property type="evidence" value="ECO:0007669"/>
    <property type="project" value="TreeGrafter"/>
</dbReference>
<dbReference type="GO" id="GO:0003735">
    <property type="term" value="F:structural constituent of ribosome"/>
    <property type="evidence" value="ECO:0007669"/>
    <property type="project" value="InterPro"/>
</dbReference>
<dbReference type="GO" id="GO:0006412">
    <property type="term" value="P:translation"/>
    <property type="evidence" value="ECO:0007669"/>
    <property type="project" value="UniProtKB-UniRule"/>
</dbReference>
<dbReference type="FunFam" id="3.30.1320.10:FF:000005">
    <property type="entry name" value="30S ribosomal protein S16"/>
    <property type="match status" value="1"/>
</dbReference>
<dbReference type="Gene3D" id="3.30.1320.10">
    <property type="match status" value="1"/>
</dbReference>
<dbReference type="HAMAP" id="MF_00385">
    <property type="entry name" value="Ribosomal_bS16"/>
    <property type="match status" value="1"/>
</dbReference>
<dbReference type="InterPro" id="IPR000307">
    <property type="entry name" value="Ribosomal_bS16"/>
</dbReference>
<dbReference type="InterPro" id="IPR023803">
    <property type="entry name" value="Ribosomal_bS16_dom_sf"/>
</dbReference>
<dbReference type="NCBIfam" id="TIGR00002">
    <property type="entry name" value="S16"/>
    <property type="match status" value="1"/>
</dbReference>
<dbReference type="PANTHER" id="PTHR12919">
    <property type="entry name" value="30S RIBOSOMAL PROTEIN S16"/>
    <property type="match status" value="1"/>
</dbReference>
<dbReference type="PANTHER" id="PTHR12919:SF20">
    <property type="entry name" value="SMALL RIBOSOMAL SUBUNIT PROTEIN BS16M"/>
    <property type="match status" value="1"/>
</dbReference>
<dbReference type="Pfam" id="PF00886">
    <property type="entry name" value="Ribosomal_S16"/>
    <property type="match status" value="1"/>
</dbReference>
<dbReference type="SUPFAM" id="SSF54565">
    <property type="entry name" value="Ribosomal protein S16"/>
    <property type="match status" value="1"/>
</dbReference>
<organism>
    <name type="scientific">Petrotoga mobilis (strain DSM 10674 / SJ95)</name>
    <dbReference type="NCBI Taxonomy" id="403833"/>
    <lineage>
        <taxon>Bacteria</taxon>
        <taxon>Thermotogati</taxon>
        <taxon>Thermotogota</taxon>
        <taxon>Thermotogae</taxon>
        <taxon>Petrotogales</taxon>
        <taxon>Petrotogaceae</taxon>
        <taxon>Petrotoga</taxon>
    </lineage>
</organism>
<proteinExistence type="inferred from homology"/>
<sequence length="111" mass="13190">MVKIRLNRMGRRHQPFYRIVIVDSRNKRSGKYIESIGYYDPLNNSNQYKVDEDKALDWLLKGAQPTDTARRILRKMGVMKRYDEIKFQARKEKGVKESNEIVEPEGEEVKE</sequence>